<organism>
    <name type="scientific">Natronomonas pharaonis (strain ATCC 35678 / DSM 2160 / CIP 103997 / JCM 8858 / NBRC 14720 / NCIMB 2260 / Gabara)</name>
    <name type="common">Halobacterium pharaonis</name>
    <dbReference type="NCBI Taxonomy" id="348780"/>
    <lineage>
        <taxon>Archaea</taxon>
        <taxon>Methanobacteriati</taxon>
        <taxon>Methanobacteriota</taxon>
        <taxon>Stenosarchaea group</taxon>
        <taxon>Halobacteria</taxon>
        <taxon>Halobacteriales</taxon>
        <taxon>Haloarculaceae</taxon>
        <taxon>Natronomonas</taxon>
    </lineage>
</organism>
<proteinExistence type="inferred from homology"/>
<keyword id="KW-0238">DNA-binding</keyword>
<keyword id="KW-1185">Reference proteome</keyword>
<keyword id="KW-0804">Transcription</keyword>
<keyword id="KW-0805">Transcription regulation</keyword>
<evidence type="ECO:0000255" key="1">
    <source>
        <dbReference type="HAMAP-Rule" id="MF_01909"/>
    </source>
</evidence>
<accession>Q3IP08</accession>
<gene>
    <name evidence="1" type="primary">tfe</name>
    <name type="ordered locus">NP_4106A</name>
</gene>
<name>TFE_NATPD</name>
<sequence>MAFEDLLNDPVIQKYLHELVGPTGMPVAAAPPDGEVTDEELAEELGLELNDVRRALFILYENDLASYRRLRDEDSGWLTYLWTFQYENIPEQLEEEMHRLLEALENRRQYESENEFYLCGECQLRFEFDEAMEFGFECPECGGRLESMENDRLVNAMEQHIEALRDELHVETAEA</sequence>
<comment type="function">
    <text evidence="1">Transcription factor that plays a role in the activation of archaeal genes transcribed by RNA polymerase. Facilitates transcription initiation by enhancing TATA-box recognition by TATA-box-binding protein (Tbp), and transcription factor B (Tfb) and RNA polymerase recruitment. Not absolutely required for transcription in vitro, but particularly important in cases where Tbp or Tfb function is not optimal. It dynamically alters the nucleic acid-binding properties of RNA polymerases by stabilizing the initiation complex and destabilizing elongation complexes. Seems to translocate with the RNA polymerase following initiation and acts by binding to the non template strand of the transcription bubble in elongation complexes.</text>
</comment>
<comment type="subunit">
    <text evidence="1">Monomer. Interaction with RNA polymerase subunits RpoF and RpoE is necessary for Tfe stimulatory transcription activity. Able to interact with Tbp and RNA polymerase in the absence of DNA promoter. Interacts both with the preinitiation and elongation complexes.</text>
</comment>
<comment type="domain">
    <text evidence="1">The winged helix domain is involved in binding to DNA in the preinitiation complex.</text>
</comment>
<comment type="similarity">
    <text evidence="1">Belongs to the TFE family.</text>
</comment>
<feature type="chain" id="PRO_0000326614" description="Transcription factor E">
    <location>
        <begin position="1"/>
        <end position="175"/>
    </location>
</feature>
<feature type="domain" description="HTH TFE/IIEalpha-type" evidence="1">
    <location>
        <begin position="8"/>
        <end position="90"/>
    </location>
</feature>
<reference key="1">
    <citation type="journal article" date="2005" name="Genome Res.">
        <title>Living with two extremes: conclusions from the genome sequence of Natronomonas pharaonis.</title>
        <authorList>
            <person name="Falb M."/>
            <person name="Pfeiffer F."/>
            <person name="Palm P."/>
            <person name="Rodewald K."/>
            <person name="Hickmann V."/>
            <person name="Tittor J."/>
            <person name="Oesterhelt D."/>
        </authorList>
    </citation>
    <scope>NUCLEOTIDE SEQUENCE [LARGE SCALE GENOMIC DNA]</scope>
    <source>
        <strain>ATCC 35678 / DSM 2160 / CIP 103997 / JCM 8858 / NBRC 14720 / NCIMB 2260 / Gabara</strain>
    </source>
</reference>
<protein>
    <recommendedName>
        <fullName evidence="1">Transcription factor E</fullName>
        <shortName evidence="1">TFE</shortName>
    </recommendedName>
    <alternativeName>
        <fullName evidence="1">TFIIE subunit alpha homolog</fullName>
    </alternativeName>
    <alternativeName>
        <fullName evidence="1">Transcription initiation factor TFIIE</fullName>
    </alternativeName>
</protein>
<dbReference type="EMBL" id="CR936257">
    <property type="protein sequence ID" value="CAI50144.1"/>
    <property type="molecule type" value="Genomic_DNA"/>
</dbReference>
<dbReference type="RefSeq" id="WP_011323760.1">
    <property type="nucleotide sequence ID" value="NC_007426.1"/>
</dbReference>
<dbReference type="SMR" id="Q3IP08"/>
<dbReference type="STRING" id="348780.NP_4106A"/>
<dbReference type="EnsemblBacteria" id="CAI50144">
    <property type="protein sequence ID" value="CAI50144"/>
    <property type="gene ID" value="NP_4106A"/>
</dbReference>
<dbReference type="GeneID" id="3701974"/>
<dbReference type="KEGG" id="nph:NP_4106A"/>
<dbReference type="eggNOG" id="arCOG04270">
    <property type="taxonomic scope" value="Archaea"/>
</dbReference>
<dbReference type="HOGENOM" id="CLU_100097_0_0_2"/>
<dbReference type="OrthoDB" id="5935at2157"/>
<dbReference type="Proteomes" id="UP000002698">
    <property type="component" value="Chromosome"/>
</dbReference>
<dbReference type="GO" id="GO:0003677">
    <property type="term" value="F:DNA binding"/>
    <property type="evidence" value="ECO:0007669"/>
    <property type="project" value="UniProtKB-KW"/>
</dbReference>
<dbReference type="GO" id="GO:0006355">
    <property type="term" value="P:regulation of DNA-templated transcription"/>
    <property type="evidence" value="ECO:0007669"/>
    <property type="project" value="InterPro"/>
</dbReference>
<dbReference type="GO" id="GO:0006367">
    <property type="term" value="P:transcription initiation at RNA polymerase II promoter"/>
    <property type="evidence" value="ECO:0007669"/>
    <property type="project" value="InterPro"/>
</dbReference>
<dbReference type="FunFam" id="1.10.10.10:FF:000264">
    <property type="entry name" value="Transcription factor E"/>
    <property type="match status" value="1"/>
</dbReference>
<dbReference type="Gene3D" id="1.10.10.10">
    <property type="entry name" value="Winged helix-like DNA-binding domain superfamily/Winged helix DNA-binding domain"/>
    <property type="match status" value="1"/>
</dbReference>
<dbReference type="HAMAP" id="MF_01909">
    <property type="entry name" value="TFE_arch"/>
    <property type="match status" value="1"/>
</dbReference>
<dbReference type="InterPro" id="IPR016481">
    <property type="entry name" value="TF_E_archaea"/>
</dbReference>
<dbReference type="InterPro" id="IPR039997">
    <property type="entry name" value="TFE"/>
</dbReference>
<dbReference type="InterPro" id="IPR017919">
    <property type="entry name" value="TFIIE/TFIIEa_HTH"/>
</dbReference>
<dbReference type="InterPro" id="IPR002853">
    <property type="entry name" value="TFIIE_asu"/>
</dbReference>
<dbReference type="InterPro" id="IPR024550">
    <property type="entry name" value="TFIIEa/SarR/Rpc3_HTH_dom"/>
</dbReference>
<dbReference type="InterPro" id="IPR036388">
    <property type="entry name" value="WH-like_DNA-bd_sf"/>
</dbReference>
<dbReference type="InterPro" id="IPR036390">
    <property type="entry name" value="WH_DNA-bd_sf"/>
</dbReference>
<dbReference type="NCBIfam" id="TIGR00373">
    <property type="entry name" value="transcription factor E"/>
    <property type="match status" value="1"/>
</dbReference>
<dbReference type="PANTHER" id="PTHR13097:SF7">
    <property type="entry name" value="GENERAL TRANSCRIPTION FACTOR IIE SUBUNIT 1"/>
    <property type="match status" value="1"/>
</dbReference>
<dbReference type="PANTHER" id="PTHR13097">
    <property type="entry name" value="TRANSCRIPTION INITIATION FACTOR IIE, ALPHA SUBUNIT"/>
    <property type="match status" value="1"/>
</dbReference>
<dbReference type="Pfam" id="PF02002">
    <property type="entry name" value="TFIIE_alpha"/>
    <property type="match status" value="1"/>
</dbReference>
<dbReference type="PIRSF" id="PIRSF006373">
    <property type="entry name" value="TF_E_archaea"/>
    <property type="match status" value="1"/>
</dbReference>
<dbReference type="SMART" id="SM00531">
    <property type="entry name" value="TFIIE"/>
    <property type="match status" value="1"/>
</dbReference>
<dbReference type="SUPFAM" id="SSF46785">
    <property type="entry name" value="Winged helix' DNA-binding domain"/>
    <property type="match status" value="1"/>
</dbReference>
<dbReference type="PROSITE" id="PS51344">
    <property type="entry name" value="HTH_TFE_IIE"/>
    <property type="match status" value="1"/>
</dbReference>